<sequence>MTPPEERQMLRETVASLVAKHAGPAAVRAAMASDRGYDESLWRLLCEQVGAAALVIPEELGGAGGELADAAIVVQELGRALVPSPLLGTTLAELALLAAAKPDAQALTELAQGSAIGALVLDPDYVVNGDIADIVVAATSGQLTRWTRFSAQPVATMDPTRRLARLQSEETEPLCPDPGIADTAAILLAAEQIGAAERCLQLTVEYAKSRVQFGRPIGSFQALKHRMADLYVTIAAARAVVADACHAPTPTNAATARLAASEALSTAAAEGIQLHGGIAITWEHDMHLYFKRAHGSAQLLESPREVLRRLESEVWESP</sequence>
<gene>
    <name evidence="3" type="primary">ipdE2</name>
    <name evidence="5" type="synonym">fadE33</name>
    <name evidence="5" type="ordered locus">Rv3564</name>
</gene>
<dbReference type="EC" id="1.3.99.-" evidence="2"/>
<dbReference type="EMBL" id="AL123456">
    <property type="protein sequence ID" value="CCP46386.1"/>
    <property type="molecule type" value="Genomic_DNA"/>
</dbReference>
<dbReference type="RefSeq" id="NP_218081.1">
    <property type="nucleotide sequence ID" value="NC_000962.3"/>
</dbReference>
<dbReference type="RefSeq" id="WP_003419352.1">
    <property type="nucleotide sequence ID" value="NZ_NVQJ01000014.1"/>
</dbReference>
<dbReference type="SMR" id="I6YCF5"/>
<dbReference type="FunCoup" id="I6YCF5">
    <property type="interactions" value="1"/>
</dbReference>
<dbReference type="STRING" id="83332.Rv3564"/>
<dbReference type="PaxDb" id="83332-Rv3564"/>
<dbReference type="DNASU" id="888458"/>
<dbReference type="GeneID" id="888458"/>
<dbReference type="KEGG" id="mtu:Rv3564"/>
<dbReference type="KEGG" id="mtv:RVBD_3564"/>
<dbReference type="PATRIC" id="fig|83332.111.peg.3969"/>
<dbReference type="TubercuList" id="Rv3564"/>
<dbReference type="eggNOG" id="COG1960">
    <property type="taxonomic scope" value="Bacteria"/>
</dbReference>
<dbReference type="InParanoid" id="I6YCF5"/>
<dbReference type="OrthoDB" id="8677713at2"/>
<dbReference type="PhylomeDB" id="I6YCF5"/>
<dbReference type="UniPathway" id="UPA01058"/>
<dbReference type="Proteomes" id="UP000001584">
    <property type="component" value="Chromosome"/>
</dbReference>
<dbReference type="GO" id="GO:0003995">
    <property type="term" value="F:acyl-CoA dehydrogenase activity"/>
    <property type="evidence" value="ECO:0000318"/>
    <property type="project" value="GO_Central"/>
</dbReference>
<dbReference type="GO" id="GO:0050660">
    <property type="term" value="F:flavin adenine dinucleotide binding"/>
    <property type="evidence" value="ECO:0007669"/>
    <property type="project" value="InterPro"/>
</dbReference>
<dbReference type="GO" id="GO:0006707">
    <property type="term" value="P:cholesterol catabolic process"/>
    <property type="evidence" value="ECO:0007669"/>
    <property type="project" value="UniProtKB-UniPathway"/>
</dbReference>
<dbReference type="FunFam" id="1.20.140.10:FF:000054">
    <property type="entry name" value="Acyl-CoA dehydrogenase FadE33"/>
    <property type="match status" value="1"/>
</dbReference>
<dbReference type="Gene3D" id="1.10.540.10">
    <property type="entry name" value="Acyl-CoA dehydrogenase/oxidase, N-terminal domain"/>
    <property type="match status" value="1"/>
</dbReference>
<dbReference type="Gene3D" id="1.20.140.10">
    <property type="entry name" value="Butyryl-CoA Dehydrogenase, subunit A, domain 3"/>
    <property type="match status" value="1"/>
</dbReference>
<dbReference type="InterPro" id="IPR036250">
    <property type="entry name" value="AcylCo_DH-like_C"/>
</dbReference>
<dbReference type="InterPro" id="IPR009075">
    <property type="entry name" value="AcylCo_DH/oxidase_C"/>
</dbReference>
<dbReference type="InterPro" id="IPR013786">
    <property type="entry name" value="AcylCoA_DH/ox_N"/>
</dbReference>
<dbReference type="InterPro" id="IPR037069">
    <property type="entry name" value="AcylCoA_DH/ox_N_sf"/>
</dbReference>
<dbReference type="InterPro" id="IPR009100">
    <property type="entry name" value="AcylCoA_DH/oxidase_NM_dom_sf"/>
</dbReference>
<dbReference type="PANTHER" id="PTHR43884">
    <property type="entry name" value="ACYL-COA DEHYDROGENASE"/>
    <property type="match status" value="1"/>
</dbReference>
<dbReference type="PANTHER" id="PTHR43884:SF20">
    <property type="entry name" value="ACYL-COA DEHYDROGENASE FADE28"/>
    <property type="match status" value="1"/>
</dbReference>
<dbReference type="Pfam" id="PF00441">
    <property type="entry name" value="Acyl-CoA_dh_1"/>
    <property type="match status" value="1"/>
</dbReference>
<dbReference type="Pfam" id="PF02771">
    <property type="entry name" value="Acyl-CoA_dh_N"/>
    <property type="match status" value="1"/>
</dbReference>
<dbReference type="SUPFAM" id="SSF47203">
    <property type="entry name" value="Acyl-CoA dehydrogenase C-terminal domain-like"/>
    <property type="match status" value="1"/>
</dbReference>
<dbReference type="SUPFAM" id="SSF56645">
    <property type="entry name" value="Acyl-CoA dehydrogenase NM domain-like"/>
    <property type="match status" value="1"/>
</dbReference>
<accession>I6YCF5</accession>
<protein>
    <recommendedName>
        <fullName evidence="4">Acyl-CoA dehydrogenase IpdE2</fullName>
        <ecNumber evidence="2">1.3.99.-</ecNumber>
    </recommendedName>
    <alternativeName>
        <fullName evidence="4">5OH-HIP-CoA dehydrogenase beta subunit</fullName>
    </alternativeName>
</protein>
<evidence type="ECO:0000250" key="1">
    <source>
        <dbReference type="UniProtKB" id="I6Y3Q0"/>
    </source>
</evidence>
<evidence type="ECO:0000269" key="2">
    <source>
    </source>
</evidence>
<evidence type="ECO:0000303" key="3">
    <source>
    </source>
</evidence>
<evidence type="ECO:0000305" key="4"/>
<evidence type="ECO:0000312" key="5">
    <source>
        <dbReference type="EMBL" id="CCP46386.1"/>
    </source>
</evidence>
<organism>
    <name type="scientific">Mycobacterium tuberculosis (strain ATCC 25618 / H37Rv)</name>
    <dbReference type="NCBI Taxonomy" id="83332"/>
    <lineage>
        <taxon>Bacteria</taxon>
        <taxon>Bacillati</taxon>
        <taxon>Actinomycetota</taxon>
        <taxon>Actinomycetes</taxon>
        <taxon>Mycobacteriales</taxon>
        <taxon>Mycobacteriaceae</taxon>
        <taxon>Mycobacterium</taxon>
        <taxon>Mycobacterium tuberculosis complex</taxon>
    </lineage>
</organism>
<feature type="chain" id="PRO_0000452317" description="Acyl-CoA dehydrogenase IpdE2">
    <location>
        <begin position="1"/>
        <end position="318"/>
    </location>
</feature>
<feature type="binding site" evidence="1">
    <location>
        <position position="210"/>
    </location>
    <ligand>
        <name>FAD</name>
        <dbReference type="ChEBI" id="CHEBI:57692"/>
    </ligand>
</feature>
<feature type="binding site" evidence="1">
    <location>
        <position position="277"/>
    </location>
    <ligand>
        <name>FAD</name>
        <dbReference type="ChEBI" id="CHEBI:57692"/>
    </ligand>
</feature>
<reference key="1">
    <citation type="journal article" date="1998" name="Nature">
        <title>Deciphering the biology of Mycobacterium tuberculosis from the complete genome sequence.</title>
        <authorList>
            <person name="Cole S.T."/>
            <person name="Brosch R."/>
            <person name="Parkhill J."/>
            <person name="Garnier T."/>
            <person name="Churcher C.M."/>
            <person name="Harris D.E."/>
            <person name="Gordon S.V."/>
            <person name="Eiglmeier K."/>
            <person name="Gas S."/>
            <person name="Barry C.E. III"/>
            <person name="Tekaia F."/>
            <person name="Badcock K."/>
            <person name="Basham D."/>
            <person name="Brown D."/>
            <person name="Chillingworth T."/>
            <person name="Connor R."/>
            <person name="Davies R.M."/>
            <person name="Devlin K."/>
            <person name="Feltwell T."/>
            <person name="Gentles S."/>
            <person name="Hamlin N."/>
            <person name="Holroyd S."/>
            <person name="Hornsby T."/>
            <person name="Jagels K."/>
            <person name="Krogh A."/>
            <person name="McLean J."/>
            <person name="Moule S."/>
            <person name="Murphy L.D."/>
            <person name="Oliver S."/>
            <person name="Osborne J."/>
            <person name="Quail M.A."/>
            <person name="Rajandream M.A."/>
            <person name="Rogers J."/>
            <person name="Rutter S."/>
            <person name="Seeger K."/>
            <person name="Skelton S."/>
            <person name="Squares S."/>
            <person name="Squares R."/>
            <person name="Sulston J.E."/>
            <person name="Taylor K."/>
            <person name="Whitehead S."/>
            <person name="Barrell B.G."/>
        </authorList>
    </citation>
    <scope>NUCLEOTIDE SEQUENCE [LARGE SCALE GENOMIC DNA]</scope>
    <source>
        <strain>ATCC 25618 / H37Rv</strain>
    </source>
</reference>
<reference key="2">
    <citation type="journal article" date="2011" name="Mol. Cell. Proteomics">
        <title>Proteogenomic analysis of Mycobacterium tuberculosis by high resolution mass spectrometry.</title>
        <authorList>
            <person name="Kelkar D.S."/>
            <person name="Kumar D."/>
            <person name="Kumar P."/>
            <person name="Balakrishnan L."/>
            <person name="Muthusamy B."/>
            <person name="Yadav A.K."/>
            <person name="Shrivastava P."/>
            <person name="Marimuthu A."/>
            <person name="Anand S."/>
            <person name="Sundaram H."/>
            <person name="Kingsbury R."/>
            <person name="Harsha H.C."/>
            <person name="Nair B."/>
            <person name="Prasad T.S."/>
            <person name="Chauhan D.S."/>
            <person name="Katoch K."/>
            <person name="Katoch V.M."/>
            <person name="Kumar P."/>
            <person name="Chaerkady R."/>
            <person name="Ramachandran S."/>
            <person name="Dash D."/>
            <person name="Pandey A."/>
        </authorList>
    </citation>
    <scope>IDENTIFICATION BY MASS SPECTROMETRY [LARGE SCALE ANALYSIS]</scope>
    <source>
        <strain>ATCC 25618 / H37Rv</strain>
    </source>
</reference>
<reference key="3">
    <citation type="journal article" date="2020" name="Biochemistry">
        <title>IpdE1-IpdE2 is a heterotetrameric acyl coenzyme A dehydrogenase that is widely distributed in steroid-degrading bacteria.</title>
        <authorList>
            <person name="Gadbery J.E."/>
            <person name="Round J.W."/>
            <person name="Yuan T."/>
            <person name="Wipperman M.F."/>
            <person name="Story K.T."/>
            <person name="Crowe A.M."/>
            <person name="Casabon I."/>
            <person name="Liu J."/>
            <person name="Yang X."/>
            <person name="Eltis L.D."/>
            <person name="Sampson N.S."/>
        </authorList>
    </citation>
    <scope>FUNCTION</scope>
    <scope>CATALYTIC ACTIVITY</scope>
    <scope>COFACTOR</scope>
    <scope>PATHWAY</scope>
    <scope>SUBUNIT</scope>
    <source>
        <strain>H37Rv</strain>
    </source>
</reference>
<comment type="function">
    <text evidence="2">Involved in cholesterol degradation. Catalyzes the dehydrogenation of 5OH-HIP-CoA to 5OH-HIPE-CoA (PubMed:32101684). Can also use octanoyl-CoA and dihydroferuloyl-CoA, with lower efficiency. Cannot use 3-oxo-4-pregnene-20-carboxyl-CoA (3-OPC-CoA) (PubMed:32101684).</text>
</comment>
<comment type="catalytic activity">
    <reaction evidence="2">
        <text>3-[(3aS,4S,5R,7aS)-5-hydroxy-7a-methyl-1-oxo-octahydro-1H-inden-4-yl]propanoyl-CoA + A = (2E)-3-[(3aS,4S,5R,7aS)-5-hydroxy-7a-methyl-1-oxo-octahydro-1H-inden-4-yl]prop-2-enoyl-CoA + AH2</text>
        <dbReference type="Rhea" id="RHEA:66348"/>
        <dbReference type="ChEBI" id="CHEBI:13193"/>
        <dbReference type="ChEBI" id="CHEBI:17499"/>
        <dbReference type="ChEBI" id="CHEBI:83738"/>
        <dbReference type="ChEBI" id="CHEBI:167059"/>
    </reaction>
    <physiologicalReaction direction="left-to-right" evidence="2">
        <dbReference type="Rhea" id="RHEA:66349"/>
    </physiologicalReaction>
</comment>
<comment type="cofactor">
    <cofactor evidence="2">
        <name>FAD</name>
        <dbReference type="ChEBI" id="CHEBI:57692"/>
    </cofactor>
    <text evidence="2">Binds 2 FAD per heterotetramer.</text>
</comment>
<comment type="pathway">
    <text evidence="2">Steroid metabolism; cholesterol degradation.</text>
</comment>
<comment type="subunit">
    <text evidence="2">Heterotetramer composed of 2 IpdE1 subunits and 2 IpdE2 subunits.</text>
</comment>
<comment type="similarity">
    <text evidence="4">Belongs to the acyl-CoA dehydrogenase family.</text>
</comment>
<proteinExistence type="evidence at protein level"/>
<keyword id="KW-0153">Cholesterol metabolism</keyword>
<keyword id="KW-0274">FAD</keyword>
<keyword id="KW-0285">Flavoprotein</keyword>
<keyword id="KW-0443">Lipid metabolism</keyword>
<keyword id="KW-0560">Oxidoreductase</keyword>
<keyword id="KW-1185">Reference proteome</keyword>
<keyword id="KW-0753">Steroid metabolism</keyword>
<keyword id="KW-1207">Sterol metabolism</keyword>
<name>IPDE2_MYCTU</name>